<feature type="chain" id="PRO_1000126182" description="UPF0178 protein Bphyt_5655">
    <location>
        <begin position="1"/>
        <end position="165"/>
    </location>
</feature>
<feature type="region of interest" description="Disordered" evidence="2">
    <location>
        <begin position="115"/>
        <end position="134"/>
    </location>
</feature>
<feature type="region of interest" description="Disordered" evidence="2">
    <location>
        <begin position="139"/>
        <end position="165"/>
    </location>
</feature>
<proteinExistence type="inferred from homology"/>
<evidence type="ECO:0000255" key="1">
    <source>
        <dbReference type="HAMAP-Rule" id="MF_00489"/>
    </source>
</evidence>
<evidence type="ECO:0000256" key="2">
    <source>
        <dbReference type="SAM" id="MobiDB-lite"/>
    </source>
</evidence>
<dbReference type="EMBL" id="CP001053">
    <property type="protein sequence ID" value="ACD20002.1"/>
    <property type="molecule type" value="Genomic_DNA"/>
</dbReference>
<dbReference type="RefSeq" id="WP_012427510.1">
    <property type="nucleotide sequence ID" value="NC_010676.1"/>
</dbReference>
<dbReference type="STRING" id="398527.Bphyt_5655"/>
<dbReference type="KEGG" id="bpy:Bphyt_5655"/>
<dbReference type="eggNOG" id="COG1671">
    <property type="taxonomic scope" value="Bacteria"/>
</dbReference>
<dbReference type="HOGENOM" id="CLU_106619_2_1_4"/>
<dbReference type="OrthoDB" id="9798918at2"/>
<dbReference type="Proteomes" id="UP000001739">
    <property type="component" value="Chromosome 2"/>
</dbReference>
<dbReference type="CDD" id="cd18720">
    <property type="entry name" value="PIN_YqxD-like"/>
    <property type="match status" value="1"/>
</dbReference>
<dbReference type="HAMAP" id="MF_00489">
    <property type="entry name" value="UPF0178"/>
    <property type="match status" value="1"/>
</dbReference>
<dbReference type="InterPro" id="IPR003791">
    <property type="entry name" value="UPF0178"/>
</dbReference>
<dbReference type="NCBIfam" id="NF001095">
    <property type="entry name" value="PRK00124.1"/>
    <property type="match status" value="1"/>
</dbReference>
<dbReference type="PANTHER" id="PTHR35146">
    <property type="entry name" value="UPF0178 PROTEIN YAII"/>
    <property type="match status" value="1"/>
</dbReference>
<dbReference type="PANTHER" id="PTHR35146:SF1">
    <property type="entry name" value="UPF0178 PROTEIN YAII"/>
    <property type="match status" value="1"/>
</dbReference>
<dbReference type="Pfam" id="PF02639">
    <property type="entry name" value="DUF188"/>
    <property type="match status" value="1"/>
</dbReference>
<comment type="similarity">
    <text evidence="1">Belongs to the UPF0178 family.</text>
</comment>
<sequence length="165" mass="17829">MSIWVDADACPVVIKDMLYRAARRTNTTLTLVANSFLRVPPSPLIRAIQVPAGFDAADDLIAERVAAGDLVITADIPLAAAVLAKNAQALDPRGNWYTPGTIEERLRMRSMLDQLRGSGVDTGGPSAFSQRDSKSFAGELDRWLSRQRPQPDASAPQSADEPPTE</sequence>
<accession>B2TFJ4</accession>
<reference key="1">
    <citation type="journal article" date="2011" name="J. Bacteriol.">
        <title>Complete genome sequence of the plant growth-promoting endophyte Burkholderia phytofirmans strain PsJN.</title>
        <authorList>
            <person name="Weilharter A."/>
            <person name="Mitter B."/>
            <person name="Shin M.V."/>
            <person name="Chain P.S."/>
            <person name="Nowak J."/>
            <person name="Sessitsch A."/>
        </authorList>
    </citation>
    <scope>NUCLEOTIDE SEQUENCE [LARGE SCALE GENOMIC DNA]</scope>
    <source>
        <strain>DSM 17436 / LMG 22146 / PsJN</strain>
    </source>
</reference>
<organism>
    <name type="scientific">Paraburkholderia phytofirmans (strain DSM 17436 / LMG 22146 / PsJN)</name>
    <name type="common">Burkholderia phytofirmans</name>
    <dbReference type="NCBI Taxonomy" id="398527"/>
    <lineage>
        <taxon>Bacteria</taxon>
        <taxon>Pseudomonadati</taxon>
        <taxon>Pseudomonadota</taxon>
        <taxon>Betaproteobacteria</taxon>
        <taxon>Burkholderiales</taxon>
        <taxon>Burkholderiaceae</taxon>
        <taxon>Paraburkholderia</taxon>
    </lineage>
</organism>
<gene>
    <name type="ordered locus">Bphyt_5655</name>
</gene>
<name>Y5655_PARPJ</name>
<protein>
    <recommendedName>
        <fullName evidence="1">UPF0178 protein Bphyt_5655</fullName>
    </recommendedName>
</protein>